<comment type="function">
    <text evidence="1">This protein binds specifically to 23S rRNA.</text>
</comment>
<comment type="function">
    <text evidence="1">The globular domain of the protein is located near the polypeptide exit tunnel on the outside of the subunit, while an extended beta-hairpin is found that lines the wall of the exit tunnel in the center of the 70S ribosome.</text>
</comment>
<comment type="subunit">
    <text evidence="1">Part of the 50S ribosomal subunit.</text>
</comment>
<comment type="subcellular location">
    <subcellularLocation>
        <location>Plastid</location>
        <location>Chloroplast</location>
    </subcellularLocation>
</comment>
<comment type="similarity">
    <text evidence="2">Belongs to the universal ribosomal protein uL22 family.</text>
</comment>
<geneLocation type="chloroplast"/>
<reference key="1">
    <citation type="journal article" date="2002" name="Proc. Natl. Acad. Sci. U.S.A.">
        <title>The chloroplast and mitochondrial genome sequences of the charophyte Chaetosphaeridium globosum: insights into the timing of the events that restructured organelle DNAs within the green algal lineage that led to land plants.</title>
        <authorList>
            <person name="Turmel M."/>
            <person name="Otis C."/>
            <person name="Lemieux C."/>
        </authorList>
    </citation>
    <scope>NUCLEOTIDE SEQUENCE [LARGE SCALE GENOMIC DNA]</scope>
    <source>
        <strain>M1311</strain>
    </source>
</reference>
<protein>
    <recommendedName>
        <fullName evidence="2">Large ribosomal subunit protein uL22c</fullName>
    </recommendedName>
    <alternativeName>
        <fullName>50S ribosomal protein L22, chloroplastic</fullName>
    </alternativeName>
</protein>
<evidence type="ECO:0000250" key="1"/>
<evidence type="ECO:0000305" key="2"/>
<dbReference type="EMBL" id="AF494278">
    <property type="protein sequence ID" value="AAM96559.1"/>
    <property type="molecule type" value="Genomic_DNA"/>
</dbReference>
<dbReference type="RefSeq" id="NP_683841.1">
    <property type="nucleotide sequence ID" value="NC_004115.1"/>
</dbReference>
<dbReference type="SMR" id="Q8M9U9"/>
<dbReference type="GeneID" id="860715"/>
<dbReference type="GO" id="GO:0009507">
    <property type="term" value="C:chloroplast"/>
    <property type="evidence" value="ECO:0007669"/>
    <property type="project" value="UniProtKB-SubCell"/>
</dbReference>
<dbReference type="GO" id="GO:0015934">
    <property type="term" value="C:large ribosomal subunit"/>
    <property type="evidence" value="ECO:0007669"/>
    <property type="project" value="InterPro"/>
</dbReference>
<dbReference type="GO" id="GO:0019843">
    <property type="term" value="F:rRNA binding"/>
    <property type="evidence" value="ECO:0007669"/>
    <property type="project" value="UniProtKB-UniRule"/>
</dbReference>
<dbReference type="GO" id="GO:0003735">
    <property type="term" value="F:structural constituent of ribosome"/>
    <property type="evidence" value="ECO:0007669"/>
    <property type="project" value="InterPro"/>
</dbReference>
<dbReference type="GO" id="GO:0006412">
    <property type="term" value="P:translation"/>
    <property type="evidence" value="ECO:0007669"/>
    <property type="project" value="UniProtKB-UniRule"/>
</dbReference>
<dbReference type="CDD" id="cd00336">
    <property type="entry name" value="Ribosomal_L22"/>
    <property type="match status" value="1"/>
</dbReference>
<dbReference type="Gene3D" id="3.90.470.10">
    <property type="entry name" value="Ribosomal protein L22/L17"/>
    <property type="match status" value="1"/>
</dbReference>
<dbReference type="HAMAP" id="MF_01331_B">
    <property type="entry name" value="Ribosomal_uL22_B"/>
    <property type="match status" value="1"/>
</dbReference>
<dbReference type="InterPro" id="IPR001063">
    <property type="entry name" value="Ribosomal_uL22"/>
</dbReference>
<dbReference type="InterPro" id="IPR005727">
    <property type="entry name" value="Ribosomal_uL22_bac/chlpt-type"/>
</dbReference>
<dbReference type="InterPro" id="IPR047867">
    <property type="entry name" value="Ribosomal_uL22_bac/org-type"/>
</dbReference>
<dbReference type="InterPro" id="IPR018260">
    <property type="entry name" value="Ribosomal_uL22_CS"/>
</dbReference>
<dbReference type="InterPro" id="IPR036394">
    <property type="entry name" value="Ribosomal_uL22_sf"/>
</dbReference>
<dbReference type="NCBIfam" id="TIGR01044">
    <property type="entry name" value="rplV_bact"/>
    <property type="match status" value="1"/>
</dbReference>
<dbReference type="PANTHER" id="PTHR13501">
    <property type="entry name" value="CHLOROPLAST 50S RIBOSOMAL PROTEIN L22-RELATED"/>
    <property type="match status" value="1"/>
</dbReference>
<dbReference type="PANTHER" id="PTHR13501:SF10">
    <property type="entry name" value="LARGE RIBOSOMAL SUBUNIT PROTEIN UL22M"/>
    <property type="match status" value="1"/>
</dbReference>
<dbReference type="Pfam" id="PF00237">
    <property type="entry name" value="Ribosomal_L22"/>
    <property type="match status" value="1"/>
</dbReference>
<dbReference type="SUPFAM" id="SSF54843">
    <property type="entry name" value="Ribosomal protein L22"/>
    <property type="match status" value="1"/>
</dbReference>
<dbReference type="PROSITE" id="PS00464">
    <property type="entry name" value="RIBOSOMAL_L22"/>
    <property type="match status" value="1"/>
</dbReference>
<name>RK22_CHAGL</name>
<keyword id="KW-0150">Chloroplast</keyword>
<keyword id="KW-0934">Plastid</keyword>
<keyword id="KW-0687">Ribonucleoprotein</keyword>
<keyword id="KW-0689">Ribosomal protein</keyword>
<keyword id="KW-0694">RNA-binding</keyword>
<keyword id="KW-0699">rRNA-binding</keyword>
<proteinExistence type="inferred from homology"/>
<feature type="chain" id="PRO_0000125300" description="Large ribosomal subunit protein uL22c">
    <location>
        <begin position="1"/>
        <end position="119"/>
    </location>
</feature>
<organism>
    <name type="scientific">Chaetosphaeridium globosum</name>
    <name type="common">Charophycean green alga</name>
    <name type="synonym">Herposteiron globosum</name>
    <dbReference type="NCBI Taxonomy" id="96477"/>
    <lineage>
        <taxon>Eukaryota</taxon>
        <taxon>Viridiplantae</taxon>
        <taxon>Streptophyta</taxon>
        <taxon>Coleochaetophyceae</taxon>
        <taxon>Coleochaetales</taxon>
        <taxon>Chaetosphaeridiaceae</taxon>
        <taxon>Chaetosphaeridium</taxon>
    </lineage>
</organism>
<sequence>MINNTNSNISIKAVGKKIRISPHKMRKVIDQIRGRSYEQALMILEFMPYKACNYVLKLLSSVAANANHNFGLNKSDLFIEKIIADGGPKLKRFQPRAQGRGYPILKPTCNLMIVVKVKS</sequence>
<gene>
    <name type="primary">rpl22</name>
</gene>
<accession>Q8M9U9</accession>